<evidence type="ECO:0000255" key="1">
    <source>
        <dbReference type="HAMAP-Rule" id="MF_00073"/>
    </source>
</evidence>
<feature type="chain" id="PRO_1000092548" description="Transcription antitermination protein NusB">
    <location>
        <begin position="1"/>
        <end position="138"/>
    </location>
</feature>
<comment type="function">
    <text evidence="1">Involved in transcription antitermination. Required for transcription of ribosomal RNA (rRNA) genes. Binds specifically to the boxA antiterminator sequence of the ribosomal RNA (rrn) operons.</text>
</comment>
<comment type="similarity">
    <text evidence="1">Belongs to the NusB family.</text>
</comment>
<gene>
    <name evidence="1" type="primary">nusB</name>
    <name type="ordered locus">Daud_1020</name>
</gene>
<name>NUSB_DESAP</name>
<accession>B1I3I9</accession>
<organism>
    <name type="scientific">Desulforudis audaxviator (strain MP104C)</name>
    <dbReference type="NCBI Taxonomy" id="477974"/>
    <lineage>
        <taxon>Bacteria</taxon>
        <taxon>Bacillati</taxon>
        <taxon>Bacillota</taxon>
        <taxon>Clostridia</taxon>
        <taxon>Thermoanaerobacterales</taxon>
        <taxon>Candidatus Desulforudaceae</taxon>
        <taxon>Candidatus Desulforudis</taxon>
    </lineage>
</organism>
<proteinExistence type="inferred from homology"/>
<sequence>MKRRRQRETALQVLFQAEVARISGERAFARTMELFGLNTEDFAYAQELVDGVLAKVDRLDRIISRVSHEWRLERMANVDRNIIRLALYEVFFRDDIPINVAVNEALELARTFGTEDSRRFVNGILGKVVEEPEEYRPE</sequence>
<dbReference type="EMBL" id="CP000860">
    <property type="protein sequence ID" value="ACA59532.1"/>
    <property type="molecule type" value="Genomic_DNA"/>
</dbReference>
<dbReference type="RefSeq" id="WP_012302118.1">
    <property type="nucleotide sequence ID" value="NC_010424.1"/>
</dbReference>
<dbReference type="SMR" id="B1I3I9"/>
<dbReference type="STRING" id="477974.Daud_1020"/>
<dbReference type="KEGG" id="dau:Daud_1020"/>
<dbReference type="eggNOG" id="COG0781">
    <property type="taxonomic scope" value="Bacteria"/>
</dbReference>
<dbReference type="HOGENOM" id="CLU_087843_3_3_9"/>
<dbReference type="OrthoDB" id="9811381at2"/>
<dbReference type="Proteomes" id="UP000008544">
    <property type="component" value="Chromosome"/>
</dbReference>
<dbReference type="GO" id="GO:0005829">
    <property type="term" value="C:cytosol"/>
    <property type="evidence" value="ECO:0007669"/>
    <property type="project" value="TreeGrafter"/>
</dbReference>
<dbReference type="GO" id="GO:0003723">
    <property type="term" value="F:RNA binding"/>
    <property type="evidence" value="ECO:0007669"/>
    <property type="project" value="UniProtKB-UniRule"/>
</dbReference>
<dbReference type="GO" id="GO:0006353">
    <property type="term" value="P:DNA-templated transcription termination"/>
    <property type="evidence" value="ECO:0007669"/>
    <property type="project" value="UniProtKB-UniRule"/>
</dbReference>
<dbReference type="GO" id="GO:0031564">
    <property type="term" value="P:transcription antitermination"/>
    <property type="evidence" value="ECO:0007669"/>
    <property type="project" value="UniProtKB-KW"/>
</dbReference>
<dbReference type="Gene3D" id="1.10.940.10">
    <property type="entry name" value="NusB-like"/>
    <property type="match status" value="1"/>
</dbReference>
<dbReference type="HAMAP" id="MF_00073">
    <property type="entry name" value="NusB"/>
    <property type="match status" value="1"/>
</dbReference>
<dbReference type="InterPro" id="IPR035926">
    <property type="entry name" value="NusB-like_sf"/>
</dbReference>
<dbReference type="InterPro" id="IPR011605">
    <property type="entry name" value="NusB_fam"/>
</dbReference>
<dbReference type="InterPro" id="IPR006027">
    <property type="entry name" value="NusB_RsmB_TIM44"/>
</dbReference>
<dbReference type="NCBIfam" id="TIGR01951">
    <property type="entry name" value="nusB"/>
    <property type="match status" value="1"/>
</dbReference>
<dbReference type="PANTHER" id="PTHR11078:SF3">
    <property type="entry name" value="ANTITERMINATION NUSB DOMAIN-CONTAINING PROTEIN"/>
    <property type="match status" value="1"/>
</dbReference>
<dbReference type="PANTHER" id="PTHR11078">
    <property type="entry name" value="N UTILIZATION SUBSTANCE PROTEIN B-RELATED"/>
    <property type="match status" value="1"/>
</dbReference>
<dbReference type="Pfam" id="PF01029">
    <property type="entry name" value="NusB"/>
    <property type="match status" value="1"/>
</dbReference>
<dbReference type="SUPFAM" id="SSF48013">
    <property type="entry name" value="NusB-like"/>
    <property type="match status" value="1"/>
</dbReference>
<protein>
    <recommendedName>
        <fullName evidence="1">Transcription antitermination protein NusB</fullName>
    </recommendedName>
    <alternativeName>
        <fullName evidence="1">Antitermination factor NusB</fullName>
    </alternativeName>
</protein>
<reference key="1">
    <citation type="submission" date="2007-10" db="EMBL/GenBank/DDBJ databases">
        <title>Complete sequence of chromosome of Desulforudis audaxviator MP104C.</title>
        <authorList>
            <person name="Copeland A."/>
            <person name="Lucas S."/>
            <person name="Lapidus A."/>
            <person name="Barry K."/>
            <person name="Glavina del Rio T."/>
            <person name="Dalin E."/>
            <person name="Tice H."/>
            <person name="Bruce D."/>
            <person name="Pitluck S."/>
            <person name="Lowry S.R."/>
            <person name="Larimer F."/>
            <person name="Land M.L."/>
            <person name="Hauser L."/>
            <person name="Kyrpides N."/>
            <person name="Ivanova N.N."/>
            <person name="Richardson P."/>
        </authorList>
    </citation>
    <scope>NUCLEOTIDE SEQUENCE [LARGE SCALE GENOMIC DNA]</scope>
    <source>
        <strain>MP104C</strain>
    </source>
</reference>
<keyword id="KW-1185">Reference proteome</keyword>
<keyword id="KW-0694">RNA-binding</keyword>
<keyword id="KW-0804">Transcription</keyword>
<keyword id="KW-0889">Transcription antitermination</keyword>
<keyword id="KW-0805">Transcription regulation</keyword>